<name>RL29_GEOTN</name>
<gene>
    <name evidence="1" type="primary">rpmC</name>
    <name type="ordered locus">GTNG_0114</name>
</gene>
<evidence type="ECO:0000255" key="1">
    <source>
        <dbReference type="HAMAP-Rule" id="MF_00374"/>
    </source>
</evidence>
<evidence type="ECO:0000305" key="2"/>
<organism>
    <name type="scientific">Geobacillus thermodenitrificans (strain NG80-2)</name>
    <dbReference type="NCBI Taxonomy" id="420246"/>
    <lineage>
        <taxon>Bacteria</taxon>
        <taxon>Bacillati</taxon>
        <taxon>Bacillota</taxon>
        <taxon>Bacilli</taxon>
        <taxon>Bacillales</taxon>
        <taxon>Anoxybacillaceae</taxon>
        <taxon>Geobacillus</taxon>
    </lineage>
</organism>
<proteinExistence type="inferred from homology"/>
<sequence>MKAKEIRDLTTAEIEQKIKSLKEELFNLRFQLATGQLENTARIRQVRKDIARMKTIIRERELAANK</sequence>
<accession>A4IJJ7</accession>
<comment type="similarity">
    <text evidence="1">Belongs to the universal ribosomal protein uL29 family.</text>
</comment>
<feature type="chain" id="PRO_1000007489" description="Large ribosomal subunit protein uL29">
    <location>
        <begin position="1"/>
        <end position="66"/>
    </location>
</feature>
<keyword id="KW-0687">Ribonucleoprotein</keyword>
<keyword id="KW-0689">Ribosomal protein</keyword>
<protein>
    <recommendedName>
        <fullName evidence="1">Large ribosomal subunit protein uL29</fullName>
    </recommendedName>
    <alternativeName>
        <fullName evidence="2">50S ribosomal protein L29</fullName>
    </alternativeName>
</protein>
<dbReference type="EMBL" id="CP000557">
    <property type="protein sequence ID" value="ABO65501.1"/>
    <property type="molecule type" value="Genomic_DNA"/>
</dbReference>
<dbReference type="RefSeq" id="WP_008881936.1">
    <property type="nucleotide sequence ID" value="NC_009328.1"/>
</dbReference>
<dbReference type="SMR" id="A4IJJ7"/>
<dbReference type="GeneID" id="87622318"/>
<dbReference type="KEGG" id="gtn:GTNG_0114"/>
<dbReference type="eggNOG" id="COG0255">
    <property type="taxonomic scope" value="Bacteria"/>
</dbReference>
<dbReference type="HOGENOM" id="CLU_158491_5_2_9"/>
<dbReference type="Proteomes" id="UP000001578">
    <property type="component" value="Chromosome"/>
</dbReference>
<dbReference type="GO" id="GO:0022625">
    <property type="term" value="C:cytosolic large ribosomal subunit"/>
    <property type="evidence" value="ECO:0007669"/>
    <property type="project" value="TreeGrafter"/>
</dbReference>
<dbReference type="GO" id="GO:0003735">
    <property type="term" value="F:structural constituent of ribosome"/>
    <property type="evidence" value="ECO:0007669"/>
    <property type="project" value="InterPro"/>
</dbReference>
<dbReference type="GO" id="GO:0006412">
    <property type="term" value="P:translation"/>
    <property type="evidence" value="ECO:0007669"/>
    <property type="project" value="UniProtKB-UniRule"/>
</dbReference>
<dbReference type="CDD" id="cd00427">
    <property type="entry name" value="Ribosomal_L29_HIP"/>
    <property type="match status" value="1"/>
</dbReference>
<dbReference type="FunFam" id="1.10.287.310:FF:000001">
    <property type="entry name" value="50S ribosomal protein L29"/>
    <property type="match status" value="1"/>
</dbReference>
<dbReference type="Gene3D" id="1.10.287.310">
    <property type="match status" value="1"/>
</dbReference>
<dbReference type="HAMAP" id="MF_00374">
    <property type="entry name" value="Ribosomal_uL29"/>
    <property type="match status" value="1"/>
</dbReference>
<dbReference type="InterPro" id="IPR050063">
    <property type="entry name" value="Ribosomal_protein_uL29"/>
</dbReference>
<dbReference type="InterPro" id="IPR001854">
    <property type="entry name" value="Ribosomal_uL29"/>
</dbReference>
<dbReference type="InterPro" id="IPR018254">
    <property type="entry name" value="Ribosomal_uL29_CS"/>
</dbReference>
<dbReference type="InterPro" id="IPR036049">
    <property type="entry name" value="Ribosomal_uL29_sf"/>
</dbReference>
<dbReference type="NCBIfam" id="TIGR00012">
    <property type="entry name" value="L29"/>
    <property type="match status" value="1"/>
</dbReference>
<dbReference type="PANTHER" id="PTHR10916">
    <property type="entry name" value="60S RIBOSOMAL PROTEIN L35/50S RIBOSOMAL PROTEIN L29"/>
    <property type="match status" value="1"/>
</dbReference>
<dbReference type="PANTHER" id="PTHR10916:SF0">
    <property type="entry name" value="LARGE RIBOSOMAL SUBUNIT PROTEIN UL29C"/>
    <property type="match status" value="1"/>
</dbReference>
<dbReference type="Pfam" id="PF00831">
    <property type="entry name" value="Ribosomal_L29"/>
    <property type="match status" value="1"/>
</dbReference>
<dbReference type="SUPFAM" id="SSF46561">
    <property type="entry name" value="Ribosomal protein L29 (L29p)"/>
    <property type="match status" value="1"/>
</dbReference>
<dbReference type="PROSITE" id="PS00579">
    <property type="entry name" value="RIBOSOMAL_L29"/>
    <property type="match status" value="1"/>
</dbReference>
<reference key="1">
    <citation type="journal article" date="2007" name="Proc. Natl. Acad. Sci. U.S.A.">
        <title>Genome and proteome of long-chain alkane degrading Geobacillus thermodenitrificans NG80-2 isolated from a deep-subsurface oil reservoir.</title>
        <authorList>
            <person name="Feng L."/>
            <person name="Wang W."/>
            <person name="Cheng J."/>
            <person name="Ren Y."/>
            <person name="Zhao G."/>
            <person name="Gao C."/>
            <person name="Tang Y."/>
            <person name="Liu X."/>
            <person name="Han W."/>
            <person name="Peng X."/>
            <person name="Liu R."/>
            <person name="Wang L."/>
        </authorList>
    </citation>
    <scope>NUCLEOTIDE SEQUENCE [LARGE SCALE GENOMIC DNA]</scope>
    <source>
        <strain>NG80-2</strain>
    </source>
</reference>